<name>Y2324_STRCO</name>
<dbReference type="EC" id="7.-.-.-"/>
<dbReference type="EMBL" id="AL939112">
    <property type="protein sequence ID" value="CAB93444.1"/>
    <property type="molecule type" value="Genomic_DNA"/>
</dbReference>
<dbReference type="RefSeq" id="NP_626571.1">
    <property type="nucleotide sequence ID" value="NC_003888.3"/>
</dbReference>
<dbReference type="RefSeq" id="WP_011028281.1">
    <property type="nucleotide sequence ID" value="NZ_VNID01000001.1"/>
</dbReference>
<dbReference type="SMR" id="Q9KXJ6"/>
<dbReference type="STRING" id="100226.gene:17759922"/>
<dbReference type="TCDB" id="3.A.1.32.1">
    <property type="family name" value="the atp-binding cassette (abc) superfamily"/>
</dbReference>
<dbReference type="PaxDb" id="100226-SCO2324"/>
<dbReference type="KEGG" id="sco:SCO2324"/>
<dbReference type="PATRIC" id="fig|100226.15.peg.2361"/>
<dbReference type="eggNOG" id="COG3845">
    <property type="taxonomic scope" value="Bacteria"/>
</dbReference>
<dbReference type="HOGENOM" id="CLU_000604_86_7_11"/>
<dbReference type="InParanoid" id="Q9KXJ6"/>
<dbReference type="OrthoDB" id="501320at2"/>
<dbReference type="PhylomeDB" id="Q9KXJ6"/>
<dbReference type="Proteomes" id="UP000001973">
    <property type="component" value="Chromosome"/>
</dbReference>
<dbReference type="GO" id="GO:0005886">
    <property type="term" value="C:plasma membrane"/>
    <property type="evidence" value="ECO:0000318"/>
    <property type="project" value="GO_Central"/>
</dbReference>
<dbReference type="GO" id="GO:0005524">
    <property type="term" value="F:ATP binding"/>
    <property type="evidence" value="ECO:0007669"/>
    <property type="project" value="UniProtKB-KW"/>
</dbReference>
<dbReference type="GO" id="GO:0016887">
    <property type="term" value="F:ATP hydrolysis activity"/>
    <property type="evidence" value="ECO:0007669"/>
    <property type="project" value="InterPro"/>
</dbReference>
<dbReference type="GO" id="GO:0022857">
    <property type="term" value="F:transmembrane transporter activity"/>
    <property type="evidence" value="ECO:0000318"/>
    <property type="project" value="GO_Central"/>
</dbReference>
<dbReference type="GO" id="GO:0055085">
    <property type="term" value="P:transmembrane transport"/>
    <property type="evidence" value="ECO:0000318"/>
    <property type="project" value="GO_Central"/>
</dbReference>
<dbReference type="CDD" id="cd03225">
    <property type="entry name" value="ABC_cobalt_CbiO_domain1"/>
    <property type="match status" value="1"/>
</dbReference>
<dbReference type="FunFam" id="3.40.50.300:FF:000760">
    <property type="entry name" value="Cobalt ABC transporter ATP-binding protein"/>
    <property type="match status" value="1"/>
</dbReference>
<dbReference type="FunFam" id="3.40.50.300:FF:003125">
    <property type="entry name" value="Cobalt ABC transporter ATP-binding protein"/>
    <property type="match status" value="1"/>
</dbReference>
<dbReference type="Gene3D" id="3.40.50.300">
    <property type="entry name" value="P-loop containing nucleotide triphosphate hydrolases"/>
    <property type="match status" value="2"/>
</dbReference>
<dbReference type="InterPro" id="IPR003593">
    <property type="entry name" value="AAA+_ATPase"/>
</dbReference>
<dbReference type="InterPro" id="IPR003439">
    <property type="entry name" value="ABC_transporter-like_ATP-bd"/>
</dbReference>
<dbReference type="InterPro" id="IPR017871">
    <property type="entry name" value="ABC_transporter-like_CS"/>
</dbReference>
<dbReference type="InterPro" id="IPR015856">
    <property type="entry name" value="ABC_transpr_CbiO/EcfA_su"/>
</dbReference>
<dbReference type="InterPro" id="IPR050095">
    <property type="entry name" value="ECF_ABC_transporter_ATP-bd"/>
</dbReference>
<dbReference type="InterPro" id="IPR027417">
    <property type="entry name" value="P-loop_NTPase"/>
</dbReference>
<dbReference type="PANTHER" id="PTHR43553">
    <property type="entry name" value="HEAVY METAL TRANSPORTER"/>
    <property type="match status" value="1"/>
</dbReference>
<dbReference type="Pfam" id="PF00005">
    <property type="entry name" value="ABC_tran"/>
    <property type="match status" value="2"/>
</dbReference>
<dbReference type="SMART" id="SM00382">
    <property type="entry name" value="AAA"/>
    <property type="match status" value="2"/>
</dbReference>
<dbReference type="SUPFAM" id="SSF52540">
    <property type="entry name" value="P-loop containing nucleoside triphosphate hydrolases"/>
    <property type="match status" value="2"/>
</dbReference>
<dbReference type="PROSITE" id="PS00211">
    <property type="entry name" value="ABC_TRANSPORTER_1"/>
    <property type="match status" value="1"/>
</dbReference>
<dbReference type="PROSITE" id="PS50893">
    <property type="entry name" value="ABC_TRANSPORTER_2"/>
    <property type="match status" value="2"/>
</dbReference>
<feature type="chain" id="PRO_0000092092" description="Putative ABC transporter ATP-binding protein SCO2324">
    <location>
        <begin position="1"/>
        <end position="563"/>
    </location>
</feature>
<feature type="domain" description="ABC transporter 1" evidence="2">
    <location>
        <begin position="2"/>
        <end position="243"/>
    </location>
</feature>
<feature type="domain" description="ABC transporter 2" evidence="2">
    <location>
        <begin position="317"/>
        <end position="545"/>
    </location>
</feature>
<feature type="region of interest" description="Disordered" evidence="3">
    <location>
        <begin position="271"/>
        <end position="317"/>
    </location>
</feature>
<feature type="compositionally biased region" description="Pro residues" evidence="3">
    <location>
        <begin position="278"/>
        <end position="293"/>
    </location>
</feature>
<feature type="binding site" evidence="2">
    <location>
        <begin position="36"/>
        <end position="43"/>
    </location>
    <ligand>
        <name>ATP</name>
        <dbReference type="ChEBI" id="CHEBI:30616"/>
        <label>1</label>
    </ligand>
</feature>
<feature type="binding site" evidence="2">
    <location>
        <begin position="349"/>
        <end position="356"/>
    </location>
    <ligand>
        <name>ATP</name>
        <dbReference type="ChEBI" id="CHEBI:30616"/>
        <label>2</label>
    </ligand>
</feature>
<evidence type="ECO:0000250" key="1"/>
<evidence type="ECO:0000255" key="2">
    <source>
        <dbReference type="PROSITE-ProRule" id="PRU00434"/>
    </source>
</evidence>
<evidence type="ECO:0000256" key="3">
    <source>
        <dbReference type="SAM" id="MobiDB-lite"/>
    </source>
</evidence>
<evidence type="ECO:0000305" key="4"/>
<keyword id="KW-0067">ATP-binding</keyword>
<keyword id="KW-1003">Cell membrane</keyword>
<keyword id="KW-0472">Membrane</keyword>
<keyword id="KW-0547">Nucleotide-binding</keyword>
<keyword id="KW-1185">Reference proteome</keyword>
<keyword id="KW-0677">Repeat</keyword>
<keyword id="KW-1278">Translocase</keyword>
<keyword id="KW-0813">Transport</keyword>
<sequence>MIRFEDVSVTYDGATEPTVRAVDFEVPEGELVLLAGPSGVGKSTVLGAVGGLVPHFTGGTLRGRVTVAGRDTRTHKPRELADVVGTVGQDPLSHFVTDTVEDELAYGMESLGLPPDVMRRRVEETLDLLGLSDLRSRPIATLSGGQQQRVAIGSVLTPHPDVLVLDEPTSALDPAAAEEVLAVLQRLVHDLGTTVLMAEHRLERVIQYADQVVLLPAPGEAPLIGAPAEVMAVSPVYPPVVGLGRLAGWSPLPLTIRNARRRAAPLRERLAGREIPDHTPPPSAPLPAPPAPRPVTSRWRRRGKRPENPSAPTPYAAEVRSLAVRRDRVQALRHVDLTVSPGETVALMGRNGAGKSTLLSALVGLVEPSAGSVRAGDAVPHRTAPRDLVRRVGLVPQEPRDLLYADTVAAECAAADRDADAAPGTCRALLSELLPGITDDIHPRDLSEGQRLTLALSVVLTARPPLLLLDEPTRGLDYAAKARLAGILRGLAAEGHAIVLATHDVELAAELAHRVVLLAEGEVIADGPAADVVVASPSYAPQVAKVLAPRKWLTVAQVREALT</sequence>
<organism>
    <name type="scientific">Streptomyces coelicolor (strain ATCC BAA-471 / A3(2) / M145)</name>
    <dbReference type="NCBI Taxonomy" id="100226"/>
    <lineage>
        <taxon>Bacteria</taxon>
        <taxon>Bacillati</taxon>
        <taxon>Actinomycetota</taxon>
        <taxon>Actinomycetes</taxon>
        <taxon>Kitasatosporales</taxon>
        <taxon>Streptomycetaceae</taxon>
        <taxon>Streptomyces</taxon>
        <taxon>Streptomyces albidoflavus group</taxon>
    </lineage>
</organism>
<reference key="1">
    <citation type="journal article" date="2002" name="Nature">
        <title>Complete genome sequence of the model actinomycete Streptomyces coelicolor A3(2).</title>
        <authorList>
            <person name="Bentley S.D."/>
            <person name="Chater K.F."/>
            <person name="Cerdeno-Tarraga A.-M."/>
            <person name="Challis G.L."/>
            <person name="Thomson N.R."/>
            <person name="James K.D."/>
            <person name="Harris D.E."/>
            <person name="Quail M.A."/>
            <person name="Kieser H."/>
            <person name="Harper D."/>
            <person name="Bateman A."/>
            <person name="Brown S."/>
            <person name="Chandra G."/>
            <person name="Chen C.W."/>
            <person name="Collins M."/>
            <person name="Cronin A."/>
            <person name="Fraser A."/>
            <person name="Goble A."/>
            <person name="Hidalgo J."/>
            <person name="Hornsby T."/>
            <person name="Howarth S."/>
            <person name="Huang C.-H."/>
            <person name="Kieser T."/>
            <person name="Larke L."/>
            <person name="Murphy L.D."/>
            <person name="Oliver K."/>
            <person name="O'Neil S."/>
            <person name="Rabbinowitsch E."/>
            <person name="Rajandream M.A."/>
            <person name="Rutherford K.M."/>
            <person name="Rutter S."/>
            <person name="Seeger K."/>
            <person name="Saunders D."/>
            <person name="Sharp S."/>
            <person name="Squares R."/>
            <person name="Squares S."/>
            <person name="Taylor K."/>
            <person name="Warren T."/>
            <person name="Wietzorrek A."/>
            <person name="Woodward J.R."/>
            <person name="Barrell B.G."/>
            <person name="Parkhill J."/>
            <person name="Hopwood D.A."/>
        </authorList>
    </citation>
    <scope>NUCLEOTIDE SEQUENCE [LARGE SCALE GENOMIC DNA]</scope>
    <source>
        <strain>ATCC BAA-471 / A3(2) / M145</strain>
    </source>
</reference>
<gene>
    <name type="ordered locus">SCO2324</name>
    <name type="ORF">SCC53.15</name>
</gene>
<proteinExistence type="inferred from homology"/>
<accession>Q9KXJ6</accession>
<protein>
    <recommendedName>
        <fullName>Putative ABC transporter ATP-binding protein SCO2324</fullName>
        <ecNumber>7.-.-.-</ecNumber>
    </recommendedName>
</protein>
<comment type="function">
    <text evidence="1">Probably part of an ABC transporter complex. Responsible for energy coupling to the transport system (By similarity).</text>
</comment>
<comment type="subcellular location">
    <subcellularLocation>
        <location evidence="1">Cell membrane</location>
        <topology evidence="1">Peripheral membrane protein</topology>
    </subcellularLocation>
</comment>
<comment type="similarity">
    <text evidence="4">Belongs to the ABC transporter superfamily.</text>
</comment>